<keyword id="KW-0963">Cytoplasm</keyword>
<keyword id="KW-0227">DNA damage</keyword>
<keyword id="KW-0234">DNA repair</keyword>
<keyword id="KW-0235">DNA replication</keyword>
<keyword id="KW-0238">DNA-binding</keyword>
<keyword id="KW-0239">DNA-directed DNA polymerase</keyword>
<keyword id="KW-0460">Magnesium</keyword>
<keyword id="KW-0479">Metal-binding</keyword>
<keyword id="KW-0515">Mutator protein</keyword>
<keyword id="KW-0548">Nucleotidyltransferase</keyword>
<keyword id="KW-1185">Reference proteome</keyword>
<keyword id="KW-0808">Transferase</keyword>
<sequence length="346" mass="37562">MPTAAPRWILHVDLDQFLASVELLRHPELAGLPVIVGGNGDPTEPRKVVTCASYEARAYGVRAGMPLRTAARRCPEATFLPSNPAAYNAASEEVVALLRDLGYPVEVWGWDEAYLAVAPGTPDDPIEVAEEIRKVILSQTGLSCSIGISDNKQRAKIATGLAKPAGIYQLTDANWMAIMGDRTVEALWGVGPKTTKRLAKLGINTVYQLAHTDSGLLMSTFGPRTALWLLLAKGGGDTEVSAQAWVPRSRSHAVTFPRDLTCRSEMESAVTELAQRTLNEVVASSRTVTRVAVTVRTATFYTRTKIRKLQAPSTDPDVITAAARHVLDLFELDRPVRLLGVRLELA</sequence>
<dbReference type="EC" id="2.7.7.7"/>
<dbReference type="EMBL" id="AL123456">
    <property type="protein sequence ID" value="CCP45865.1"/>
    <property type="molecule type" value="Genomic_DNA"/>
</dbReference>
<dbReference type="PIR" id="A70649">
    <property type="entry name" value="A70649"/>
</dbReference>
<dbReference type="RefSeq" id="NP_217572.1">
    <property type="nucleotide sequence ID" value="NC_000962.3"/>
</dbReference>
<dbReference type="RefSeq" id="WP_003899898.1">
    <property type="nucleotide sequence ID" value="NZ_NVQJ01000011.1"/>
</dbReference>
<dbReference type="SMR" id="P9WNT1"/>
<dbReference type="FunCoup" id="P9WNT1">
    <property type="interactions" value="237"/>
</dbReference>
<dbReference type="IntAct" id="P9WNT1">
    <property type="interactions" value="1"/>
</dbReference>
<dbReference type="STRING" id="83332.Rv3056"/>
<dbReference type="PaxDb" id="83332-Rv3056"/>
<dbReference type="DNASU" id="887519"/>
<dbReference type="GeneID" id="887519"/>
<dbReference type="KEGG" id="mtu:Rv3056"/>
<dbReference type="KEGG" id="mtv:RVBD_3056"/>
<dbReference type="TubercuList" id="Rv3056"/>
<dbReference type="eggNOG" id="COG0389">
    <property type="taxonomic scope" value="Bacteria"/>
</dbReference>
<dbReference type="InParanoid" id="P9WNT1"/>
<dbReference type="OrthoDB" id="9808813at2"/>
<dbReference type="PhylomeDB" id="P9WNT1"/>
<dbReference type="Proteomes" id="UP000001584">
    <property type="component" value="Chromosome"/>
</dbReference>
<dbReference type="GO" id="GO:0005829">
    <property type="term" value="C:cytosol"/>
    <property type="evidence" value="ECO:0007005"/>
    <property type="project" value="MTBBASE"/>
</dbReference>
<dbReference type="GO" id="GO:0005886">
    <property type="term" value="C:plasma membrane"/>
    <property type="evidence" value="ECO:0007005"/>
    <property type="project" value="MTBBASE"/>
</dbReference>
<dbReference type="GO" id="GO:0003684">
    <property type="term" value="F:damaged DNA binding"/>
    <property type="evidence" value="ECO:0007669"/>
    <property type="project" value="InterPro"/>
</dbReference>
<dbReference type="GO" id="GO:0003887">
    <property type="term" value="F:DNA-directed DNA polymerase activity"/>
    <property type="evidence" value="ECO:0000318"/>
    <property type="project" value="GO_Central"/>
</dbReference>
<dbReference type="GO" id="GO:0000287">
    <property type="term" value="F:magnesium ion binding"/>
    <property type="evidence" value="ECO:0007669"/>
    <property type="project" value="UniProtKB-UniRule"/>
</dbReference>
<dbReference type="GO" id="GO:0006261">
    <property type="term" value="P:DNA-templated DNA replication"/>
    <property type="evidence" value="ECO:0007669"/>
    <property type="project" value="UniProtKB-UniRule"/>
</dbReference>
<dbReference type="GO" id="GO:0042276">
    <property type="term" value="P:error-prone translesion synthesis"/>
    <property type="evidence" value="ECO:0000318"/>
    <property type="project" value="GO_Central"/>
</dbReference>
<dbReference type="GO" id="GO:0009432">
    <property type="term" value="P:SOS response"/>
    <property type="evidence" value="ECO:0000318"/>
    <property type="project" value="GO_Central"/>
</dbReference>
<dbReference type="CDD" id="cd03586">
    <property type="entry name" value="PolY_Pol_IV_kappa"/>
    <property type="match status" value="1"/>
</dbReference>
<dbReference type="FunFam" id="3.30.1490.100:FF:000018">
    <property type="entry name" value="DNA polymerase IV"/>
    <property type="match status" value="1"/>
</dbReference>
<dbReference type="Gene3D" id="3.30.70.270">
    <property type="match status" value="1"/>
</dbReference>
<dbReference type="Gene3D" id="3.40.1170.60">
    <property type="match status" value="1"/>
</dbReference>
<dbReference type="Gene3D" id="1.10.150.20">
    <property type="entry name" value="5' to 3' exonuclease, C-terminal subdomain"/>
    <property type="match status" value="1"/>
</dbReference>
<dbReference type="Gene3D" id="3.30.1490.100">
    <property type="entry name" value="DNA polymerase, Y-family, little finger domain"/>
    <property type="match status" value="1"/>
</dbReference>
<dbReference type="HAMAP" id="MF_01113">
    <property type="entry name" value="DNApol_IV"/>
    <property type="match status" value="1"/>
</dbReference>
<dbReference type="InterPro" id="IPR043502">
    <property type="entry name" value="DNA/RNA_pol_sf"/>
</dbReference>
<dbReference type="InterPro" id="IPR036775">
    <property type="entry name" value="DNA_pol_Y-fam_lit_finger_sf"/>
</dbReference>
<dbReference type="InterPro" id="IPR017961">
    <property type="entry name" value="DNA_pol_Y-fam_little_finger"/>
</dbReference>
<dbReference type="InterPro" id="IPR050116">
    <property type="entry name" value="DNA_polymerase-Y"/>
</dbReference>
<dbReference type="InterPro" id="IPR022880">
    <property type="entry name" value="DNApol_IV"/>
</dbReference>
<dbReference type="InterPro" id="IPR043128">
    <property type="entry name" value="Rev_trsase/Diguanyl_cyclase"/>
</dbReference>
<dbReference type="InterPro" id="IPR001126">
    <property type="entry name" value="UmuC"/>
</dbReference>
<dbReference type="NCBIfam" id="NF002883">
    <property type="entry name" value="PRK03352.1"/>
    <property type="match status" value="1"/>
</dbReference>
<dbReference type="PANTHER" id="PTHR11076:SF33">
    <property type="entry name" value="DNA POLYMERASE KAPPA"/>
    <property type="match status" value="1"/>
</dbReference>
<dbReference type="PANTHER" id="PTHR11076">
    <property type="entry name" value="DNA REPAIR POLYMERASE UMUC / TRANSFERASE FAMILY MEMBER"/>
    <property type="match status" value="1"/>
</dbReference>
<dbReference type="Pfam" id="PF00817">
    <property type="entry name" value="IMS"/>
    <property type="match status" value="1"/>
</dbReference>
<dbReference type="Pfam" id="PF11799">
    <property type="entry name" value="IMS_C"/>
    <property type="match status" value="1"/>
</dbReference>
<dbReference type="SUPFAM" id="SSF56672">
    <property type="entry name" value="DNA/RNA polymerases"/>
    <property type="match status" value="1"/>
</dbReference>
<dbReference type="SUPFAM" id="SSF100879">
    <property type="entry name" value="Lesion bypass DNA polymerase (Y-family), little finger domain"/>
    <property type="match status" value="1"/>
</dbReference>
<dbReference type="PROSITE" id="PS50173">
    <property type="entry name" value="UMUC"/>
    <property type="match status" value="1"/>
</dbReference>
<proteinExistence type="inferred from homology"/>
<reference key="1">
    <citation type="journal article" date="1998" name="Nature">
        <title>Deciphering the biology of Mycobacterium tuberculosis from the complete genome sequence.</title>
        <authorList>
            <person name="Cole S.T."/>
            <person name="Brosch R."/>
            <person name="Parkhill J."/>
            <person name="Garnier T."/>
            <person name="Churcher C.M."/>
            <person name="Harris D.E."/>
            <person name="Gordon S.V."/>
            <person name="Eiglmeier K."/>
            <person name="Gas S."/>
            <person name="Barry C.E. III"/>
            <person name="Tekaia F."/>
            <person name="Badcock K."/>
            <person name="Basham D."/>
            <person name="Brown D."/>
            <person name="Chillingworth T."/>
            <person name="Connor R."/>
            <person name="Davies R.M."/>
            <person name="Devlin K."/>
            <person name="Feltwell T."/>
            <person name="Gentles S."/>
            <person name="Hamlin N."/>
            <person name="Holroyd S."/>
            <person name="Hornsby T."/>
            <person name="Jagels K."/>
            <person name="Krogh A."/>
            <person name="McLean J."/>
            <person name="Moule S."/>
            <person name="Murphy L.D."/>
            <person name="Oliver S."/>
            <person name="Osborne J."/>
            <person name="Quail M.A."/>
            <person name="Rajandream M.A."/>
            <person name="Rogers J."/>
            <person name="Rutter S."/>
            <person name="Seeger K."/>
            <person name="Skelton S."/>
            <person name="Squares S."/>
            <person name="Squares R."/>
            <person name="Sulston J.E."/>
            <person name="Taylor K."/>
            <person name="Whitehead S."/>
            <person name="Barrell B.G."/>
        </authorList>
    </citation>
    <scope>NUCLEOTIDE SEQUENCE [LARGE SCALE GENOMIC DNA]</scope>
    <source>
        <strain>ATCC 25618 / H37Rv</strain>
    </source>
</reference>
<gene>
    <name type="primary">dinB2</name>
    <name type="synonym">dinP</name>
    <name type="ordered locus">Rv3056</name>
    <name type="ORF">MTCY22D7.25c</name>
</gene>
<name>DPO42_MYCTU</name>
<accession>P9WNT1</accession>
<accession>L0TD22</accession>
<accession>P63987</accession>
<accession>P95102</accession>
<evidence type="ECO:0000250" key="1"/>
<evidence type="ECO:0000305" key="2"/>
<protein>
    <recommendedName>
        <fullName>DNA polymerase IV 2</fullName>
        <shortName>Pol IV 2</shortName>
        <ecNumber>2.7.7.7</ecNumber>
    </recommendedName>
</protein>
<feature type="chain" id="PRO_0000173926" description="DNA polymerase IV 2">
    <location>
        <begin position="1"/>
        <end position="346"/>
    </location>
</feature>
<feature type="domain" description="UmuC">
    <location>
        <begin position="9"/>
        <end position="191"/>
    </location>
</feature>
<feature type="active site" evidence="1">
    <location>
        <position position="112"/>
    </location>
</feature>
<feature type="binding site" evidence="1">
    <location>
        <position position="13"/>
    </location>
    <ligand>
        <name>Mg(2+)</name>
        <dbReference type="ChEBI" id="CHEBI:18420"/>
    </ligand>
</feature>
<feature type="binding site" evidence="1">
    <location>
        <position position="111"/>
    </location>
    <ligand>
        <name>Mg(2+)</name>
        <dbReference type="ChEBI" id="CHEBI:18420"/>
    </ligand>
</feature>
<feature type="site" description="Substrate discrimination" evidence="1">
    <location>
        <position position="18"/>
    </location>
</feature>
<comment type="function">
    <text evidence="1">Poorly processive, error-prone DNA polymerase involved in untargeted mutagenesis. Copies undamaged DNA at stalled replication forks, which arise in vivo from mismatched or misaligned primer ends. These misaligned primers can be extended by PolIV. Exhibits no 3'-5' exonuclease (proofreading) activity. May be involved in translesional synthesis, in conjunction with the beta clamp from PolIII (By similarity).</text>
</comment>
<comment type="catalytic activity">
    <reaction>
        <text>DNA(n) + a 2'-deoxyribonucleoside 5'-triphosphate = DNA(n+1) + diphosphate</text>
        <dbReference type="Rhea" id="RHEA:22508"/>
        <dbReference type="Rhea" id="RHEA-COMP:17339"/>
        <dbReference type="Rhea" id="RHEA-COMP:17340"/>
        <dbReference type="ChEBI" id="CHEBI:33019"/>
        <dbReference type="ChEBI" id="CHEBI:61560"/>
        <dbReference type="ChEBI" id="CHEBI:173112"/>
        <dbReference type="EC" id="2.7.7.7"/>
    </reaction>
</comment>
<comment type="cofactor">
    <cofactor evidence="1">
        <name>Mg(2+)</name>
        <dbReference type="ChEBI" id="CHEBI:18420"/>
    </cofactor>
    <text evidence="1">Binds 2 magnesium ions per subunit.</text>
</comment>
<comment type="subunit">
    <text evidence="1">Monomer.</text>
</comment>
<comment type="subcellular location">
    <subcellularLocation>
        <location evidence="1">Cytoplasm</location>
    </subcellularLocation>
</comment>
<comment type="similarity">
    <text evidence="2">Belongs to the DNA polymerase type-Y family.</text>
</comment>
<organism>
    <name type="scientific">Mycobacterium tuberculosis (strain ATCC 25618 / H37Rv)</name>
    <dbReference type="NCBI Taxonomy" id="83332"/>
    <lineage>
        <taxon>Bacteria</taxon>
        <taxon>Bacillati</taxon>
        <taxon>Actinomycetota</taxon>
        <taxon>Actinomycetes</taxon>
        <taxon>Mycobacteriales</taxon>
        <taxon>Mycobacteriaceae</taxon>
        <taxon>Mycobacterium</taxon>
        <taxon>Mycobacterium tuberculosis complex</taxon>
    </lineage>
</organism>